<accession>O22299</accession>
<protein>
    <recommendedName>
        <fullName>Homeobox protein knotted-1-like LET6</fullName>
    </recommendedName>
</protein>
<reference key="1">
    <citation type="journal article" date="1998" name="Plant Mol. Biol.">
        <title>Isolation and characterization of two knotted-like homeobox genes from tomato.</title>
        <authorList>
            <person name="Janssen B.-J."/>
            <person name="Williams A."/>
            <person name="Chen J.J."/>
            <person name="Mathern J."/>
            <person name="Hake S."/>
            <person name="Sinha N."/>
        </authorList>
    </citation>
    <scope>NUCLEOTIDE SEQUENCE [MRNA]</scope>
    <source>
        <strain>cv. VFNT Cherry</strain>
    </source>
</reference>
<comment type="function">
    <text>May have a role to play in formative events in ovule and embryo morphogenesis. Probably binds to the DNA sequence 5'-TGAC-3'.</text>
</comment>
<comment type="subcellular location">
    <subcellularLocation>
        <location evidence="4">Nucleus</location>
    </subcellularLocation>
</comment>
<comment type="tissue specificity">
    <text>Expressed in developing lateral organs and developing ovaries in flowers.</text>
</comment>
<comment type="similarity">
    <text evidence="2">Belongs to the TALE/KNOX homeobox family.</text>
</comment>
<organism>
    <name type="scientific">Solanum lycopersicum</name>
    <name type="common">Tomato</name>
    <name type="synonym">Lycopersicon esculentum</name>
    <dbReference type="NCBI Taxonomy" id="4081"/>
    <lineage>
        <taxon>Eukaryota</taxon>
        <taxon>Viridiplantae</taxon>
        <taxon>Streptophyta</taxon>
        <taxon>Embryophyta</taxon>
        <taxon>Tracheophyta</taxon>
        <taxon>Spermatophyta</taxon>
        <taxon>Magnoliopsida</taxon>
        <taxon>eudicotyledons</taxon>
        <taxon>Gunneridae</taxon>
        <taxon>Pentapetalae</taxon>
        <taxon>asterids</taxon>
        <taxon>lamiids</taxon>
        <taxon>Solanales</taxon>
        <taxon>Solanaceae</taxon>
        <taxon>Solanoideae</taxon>
        <taxon>Solaneae</taxon>
        <taxon>Solanum</taxon>
        <taxon>Solanum subgen. Lycopersicon</taxon>
    </lineage>
</organism>
<dbReference type="EMBL" id="AF000141">
    <property type="protein sequence ID" value="AAC49917.1"/>
    <property type="molecule type" value="mRNA"/>
</dbReference>
<dbReference type="PIR" id="T04317">
    <property type="entry name" value="T04317"/>
</dbReference>
<dbReference type="SMR" id="O22299"/>
<dbReference type="FunCoup" id="O22299">
    <property type="interactions" value="194"/>
</dbReference>
<dbReference type="STRING" id="4081.O22299"/>
<dbReference type="PaxDb" id="4081-Solyc02g081120.2.1"/>
<dbReference type="eggNOG" id="KOG0773">
    <property type="taxonomic scope" value="Eukaryota"/>
</dbReference>
<dbReference type="InParanoid" id="O22299"/>
<dbReference type="Proteomes" id="UP000004994">
    <property type="component" value="Unplaced"/>
</dbReference>
<dbReference type="ExpressionAtlas" id="O22299">
    <property type="expression patterns" value="baseline and differential"/>
</dbReference>
<dbReference type="GO" id="GO:0005634">
    <property type="term" value="C:nucleus"/>
    <property type="evidence" value="ECO:0000318"/>
    <property type="project" value="GO_Central"/>
</dbReference>
<dbReference type="GO" id="GO:0003677">
    <property type="term" value="F:DNA binding"/>
    <property type="evidence" value="ECO:0007669"/>
    <property type="project" value="UniProtKB-KW"/>
</dbReference>
<dbReference type="GO" id="GO:0000981">
    <property type="term" value="F:DNA-binding transcription factor activity, RNA polymerase II-specific"/>
    <property type="evidence" value="ECO:0007669"/>
    <property type="project" value="InterPro"/>
</dbReference>
<dbReference type="CDD" id="cd00086">
    <property type="entry name" value="homeodomain"/>
    <property type="match status" value="1"/>
</dbReference>
<dbReference type="Gene3D" id="1.10.10.60">
    <property type="entry name" value="Homeodomain-like"/>
    <property type="match status" value="1"/>
</dbReference>
<dbReference type="InterPro" id="IPR005539">
    <property type="entry name" value="ELK_dom"/>
</dbReference>
<dbReference type="InterPro" id="IPR001356">
    <property type="entry name" value="HD"/>
</dbReference>
<dbReference type="InterPro" id="IPR017970">
    <property type="entry name" value="Homeobox_CS"/>
</dbReference>
<dbReference type="InterPro" id="IPR009057">
    <property type="entry name" value="Homeodomain-like_sf"/>
</dbReference>
<dbReference type="InterPro" id="IPR008422">
    <property type="entry name" value="KN_HD"/>
</dbReference>
<dbReference type="InterPro" id="IPR005540">
    <property type="entry name" value="KNOX1"/>
</dbReference>
<dbReference type="InterPro" id="IPR005541">
    <property type="entry name" value="KNOX2"/>
</dbReference>
<dbReference type="InterPro" id="IPR050224">
    <property type="entry name" value="TALE_homeobox"/>
</dbReference>
<dbReference type="PANTHER" id="PTHR11850">
    <property type="entry name" value="HOMEOBOX PROTEIN TRANSCRIPTION FACTORS"/>
    <property type="match status" value="1"/>
</dbReference>
<dbReference type="Pfam" id="PF03789">
    <property type="entry name" value="ELK"/>
    <property type="match status" value="1"/>
</dbReference>
<dbReference type="Pfam" id="PF05920">
    <property type="entry name" value="Homeobox_KN"/>
    <property type="match status" value="1"/>
</dbReference>
<dbReference type="Pfam" id="PF03790">
    <property type="entry name" value="KNOX1"/>
    <property type="match status" value="1"/>
</dbReference>
<dbReference type="Pfam" id="PF03791">
    <property type="entry name" value="KNOX2"/>
    <property type="match status" value="1"/>
</dbReference>
<dbReference type="SMART" id="SM01188">
    <property type="entry name" value="ELK"/>
    <property type="match status" value="1"/>
</dbReference>
<dbReference type="SMART" id="SM00389">
    <property type="entry name" value="HOX"/>
    <property type="match status" value="1"/>
</dbReference>
<dbReference type="SMART" id="SM01255">
    <property type="entry name" value="KNOX1"/>
    <property type="match status" value="1"/>
</dbReference>
<dbReference type="SMART" id="SM01256">
    <property type="entry name" value="KNOX2"/>
    <property type="match status" value="1"/>
</dbReference>
<dbReference type="SUPFAM" id="SSF46689">
    <property type="entry name" value="Homeodomain-like"/>
    <property type="match status" value="1"/>
</dbReference>
<dbReference type="PROSITE" id="PS51213">
    <property type="entry name" value="ELK"/>
    <property type="match status" value="1"/>
</dbReference>
<dbReference type="PROSITE" id="PS00027">
    <property type="entry name" value="HOMEOBOX_1"/>
    <property type="match status" value="1"/>
</dbReference>
<dbReference type="PROSITE" id="PS50071">
    <property type="entry name" value="HOMEOBOX_2"/>
    <property type="match status" value="1"/>
</dbReference>
<evidence type="ECO:0000255" key="1">
    <source>
        <dbReference type="PROSITE-ProRule" id="PRU00108"/>
    </source>
</evidence>
<evidence type="ECO:0000255" key="2">
    <source>
        <dbReference type="PROSITE-ProRule" id="PRU00559"/>
    </source>
</evidence>
<evidence type="ECO:0000256" key="3">
    <source>
        <dbReference type="SAM" id="MobiDB-lite"/>
    </source>
</evidence>
<evidence type="ECO:0000305" key="4"/>
<keyword id="KW-0238">DNA-binding</keyword>
<keyword id="KW-0371">Homeobox</keyword>
<keyword id="KW-0539">Nucleus</keyword>
<keyword id="KW-1185">Reference proteome</keyword>
<gene>
    <name type="primary">LET6</name>
</gene>
<feature type="chain" id="PRO_0000048973" description="Homeobox protein knotted-1-like LET6">
    <location>
        <begin position="1"/>
        <end position="355"/>
    </location>
</feature>
<feature type="domain" description="ELK" evidence="2">
    <location>
        <begin position="237"/>
        <end position="257"/>
    </location>
</feature>
<feature type="DNA-binding region" description="Homeobox; TALE-type" evidence="1">
    <location>
        <begin position="258"/>
        <end position="321"/>
    </location>
</feature>
<feature type="region of interest" description="Disordered" evidence="3">
    <location>
        <begin position="75"/>
        <end position="96"/>
    </location>
</feature>
<feature type="compositionally biased region" description="Low complexity" evidence="3">
    <location>
        <begin position="79"/>
        <end position="96"/>
    </location>
</feature>
<proteinExistence type="evidence at transcript level"/>
<name>LET6_SOLLC</name>
<sequence>MEGGSSGNTSTSCLMMMGYGDHENNNNNNGNGNGNGNGNVTICAPPMMMMMPPPPPSLTNNNNAETSNNNILFLPFMDNNNNNNPQEDNNSSSSSIKSKIMAHPHYHRLLTAYLNCQKIGAPPEVVARLEEICATSATMGRSSSSSGGGIIGEDPALDQFMEAYCEMLTKYEQELSKPFKEAMVFLSRIECQFKALTLAPNSSHESALGEAMDRNGSSDEEVDVNNSFIDPQAEDRELKGQLLRKYSGYLGSLKQEFMKKRKKGKLPKEARQQLVDWWLRHIKWPYPSESQKLALAESTGLDQKQINNWFINQRKRHWKPSEDMQFVVMDAAHPHYYMDNVLANHFPMDMTPSLL</sequence>